<gene>
    <name evidence="1" type="primary">psbK</name>
</gene>
<accession>Q3ZJ18</accession>
<dbReference type="EMBL" id="AY835431">
    <property type="protein sequence ID" value="AAV80671.1"/>
    <property type="molecule type" value="Genomic_DNA"/>
</dbReference>
<dbReference type="RefSeq" id="YP_636249.1">
    <property type="nucleotide sequence ID" value="NC_008114.1"/>
</dbReference>
<dbReference type="SMR" id="Q3ZJ18"/>
<dbReference type="GeneID" id="4108715"/>
<dbReference type="GO" id="GO:0009535">
    <property type="term" value="C:chloroplast thylakoid membrane"/>
    <property type="evidence" value="ECO:0007669"/>
    <property type="project" value="UniProtKB-SubCell"/>
</dbReference>
<dbReference type="GO" id="GO:0009539">
    <property type="term" value="C:photosystem II reaction center"/>
    <property type="evidence" value="ECO:0007669"/>
    <property type="project" value="InterPro"/>
</dbReference>
<dbReference type="GO" id="GO:0015979">
    <property type="term" value="P:photosynthesis"/>
    <property type="evidence" value="ECO:0007669"/>
    <property type="project" value="UniProtKB-UniRule"/>
</dbReference>
<dbReference type="HAMAP" id="MF_00441">
    <property type="entry name" value="PSII_PsbK"/>
    <property type="match status" value="1"/>
</dbReference>
<dbReference type="InterPro" id="IPR003687">
    <property type="entry name" value="PSII_PsbK"/>
</dbReference>
<dbReference type="InterPro" id="IPR037270">
    <property type="entry name" value="PSII_PsbK_sf"/>
</dbReference>
<dbReference type="NCBIfam" id="NF002715">
    <property type="entry name" value="PRK02553.1"/>
    <property type="match status" value="1"/>
</dbReference>
<dbReference type="PANTHER" id="PTHR35325">
    <property type="match status" value="1"/>
</dbReference>
<dbReference type="PANTHER" id="PTHR35325:SF1">
    <property type="entry name" value="PHOTOSYSTEM II REACTION CENTER PROTEIN K"/>
    <property type="match status" value="1"/>
</dbReference>
<dbReference type="Pfam" id="PF02533">
    <property type="entry name" value="PsbK"/>
    <property type="match status" value="1"/>
</dbReference>
<dbReference type="SUPFAM" id="SSF161037">
    <property type="entry name" value="Photosystem II reaction center protein K, PsbK"/>
    <property type="match status" value="1"/>
</dbReference>
<comment type="function">
    <text evidence="1">One of the components of the core complex of photosystem II (PSII). PSII is a light-driven water:plastoquinone oxidoreductase that uses light energy to abstract electrons from H(2)O, generating O(2) and a proton gradient subsequently used for ATP formation. It consists of a core antenna complex that captures photons, and an electron transfer chain that converts photonic excitation into a charge separation.</text>
</comment>
<comment type="subunit">
    <text evidence="1">PSII is composed of 1 copy each of membrane proteins PsbA, PsbB, PsbC, PsbD, PsbE, PsbF, PsbH, PsbI, PsbJ, PsbK, PsbL, PsbM, PsbT, PsbX, PsbY, PsbZ, Psb30/Ycf12, at least 3 peripheral proteins of the oxygen-evolving complex and a large number of cofactors. It forms dimeric complexes.</text>
</comment>
<comment type="subcellular location">
    <subcellularLocation>
        <location evidence="1">Plastid</location>
        <location evidence="1">Chloroplast thylakoid membrane</location>
        <topology evidence="1">Single-pass membrane protein</topology>
    </subcellularLocation>
</comment>
<comment type="similarity">
    <text evidence="1">Belongs to the PsbK family.</text>
</comment>
<organism>
    <name type="scientific">Tupiella akineta</name>
    <name type="common">Green alga</name>
    <name type="synonym">Pseudendoclonium akinetum</name>
    <dbReference type="NCBI Taxonomy" id="160070"/>
    <lineage>
        <taxon>Eukaryota</taxon>
        <taxon>Viridiplantae</taxon>
        <taxon>Chlorophyta</taxon>
        <taxon>Ulvophyceae</taxon>
        <taxon>OUU clade</taxon>
        <taxon>Ulotrichales</taxon>
        <taxon>Tupiellaceae</taxon>
        <taxon>Tupiella</taxon>
    </lineage>
</organism>
<geneLocation type="chloroplast"/>
<keyword id="KW-0150">Chloroplast</keyword>
<keyword id="KW-0472">Membrane</keyword>
<keyword id="KW-0602">Photosynthesis</keyword>
<keyword id="KW-0604">Photosystem II</keyword>
<keyword id="KW-0934">Plastid</keyword>
<keyword id="KW-0674">Reaction center</keyword>
<keyword id="KW-0793">Thylakoid</keyword>
<keyword id="KW-0812">Transmembrane</keyword>
<keyword id="KW-1133">Transmembrane helix</keyword>
<sequence>MTTLLLAKLPEAYAPFDPIVDVLPVIPLLFLLLAFVWQASVSFR</sequence>
<protein>
    <recommendedName>
        <fullName evidence="1">Photosystem II reaction center protein K</fullName>
        <shortName evidence="1">PSII-K</shortName>
    </recommendedName>
</protein>
<evidence type="ECO:0000255" key="1">
    <source>
        <dbReference type="HAMAP-Rule" id="MF_00441"/>
    </source>
</evidence>
<reference key="1">
    <citation type="journal article" date="2005" name="Mol. Biol. Evol.">
        <title>The chloroplast genome sequence of the green alga Pseudendoclonium akinetum (Ulvophyceae) reveals unusual structural features and new insights into the branching order of chlorophyte lineages.</title>
        <authorList>
            <person name="Pombert J.-F."/>
            <person name="Otis C."/>
            <person name="Lemieux C."/>
            <person name="Turmel M."/>
        </authorList>
    </citation>
    <scope>NUCLEOTIDE SEQUENCE [LARGE SCALE GENOMIC DNA]</scope>
    <source>
        <strain>UTEX 1912</strain>
    </source>
</reference>
<feature type="propeptide" id="PRO_0000276172" evidence="1">
    <location>
        <begin position="1"/>
        <end position="7"/>
    </location>
</feature>
<feature type="chain" id="PRO_0000276173" description="Photosystem II reaction center protein K" evidence="1">
    <location>
        <begin position="8"/>
        <end position="44"/>
    </location>
</feature>
<feature type="transmembrane region" description="Helical" evidence="1">
    <location>
        <begin position="19"/>
        <end position="39"/>
    </location>
</feature>
<name>PSBK_TUPAK</name>
<proteinExistence type="inferred from homology"/>